<accession>Q8DGU6</accession>
<keyword id="KW-0963">Cytoplasm</keyword>
<keyword id="KW-0350">Heme biosynthesis</keyword>
<keyword id="KW-0408">Iron</keyword>
<keyword id="KW-0456">Lyase</keyword>
<keyword id="KW-0479">Metal-binding</keyword>
<keyword id="KW-0627">Porphyrin biosynthesis</keyword>
<keyword id="KW-1185">Reference proteome</keyword>
<name>HEMH_THEVB</name>
<dbReference type="EC" id="4.98.1.1" evidence="1"/>
<dbReference type="EMBL" id="BA000039">
    <property type="protein sequence ID" value="BAC09768.1"/>
    <property type="status" value="ALT_INIT"/>
    <property type="molecule type" value="Genomic_DNA"/>
</dbReference>
<dbReference type="RefSeq" id="NP_683006.1">
    <property type="nucleotide sequence ID" value="NC_004113.1"/>
</dbReference>
<dbReference type="RefSeq" id="WP_164920998.1">
    <property type="nucleotide sequence ID" value="NC_004113.1"/>
</dbReference>
<dbReference type="SMR" id="Q8DGU6"/>
<dbReference type="STRING" id="197221.gene:10748827"/>
<dbReference type="EnsemblBacteria" id="BAC09768">
    <property type="protein sequence ID" value="BAC09768"/>
    <property type="gene ID" value="BAC09768"/>
</dbReference>
<dbReference type="KEGG" id="tel:tlr2216"/>
<dbReference type="PATRIC" id="fig|197221.4.peg.2324"/>
<dbReference type="eggNOG" id="COG0276">
    <property type="taxonomic scope" value="Bacteria"/>
</dbReference>
<dbReference type="UniPathway" id="UPA00252">
    <property type="reaction ID" value="UER00325"/>
</dbReference>
<dbReference type="Proteomes" id="UP000000440">
    <property type="component" value="Chromosome"/>
</dbReference>
<dbReference type="GO" id="GO:0005737">
    <property type="term" value="C:cytoplasm"/>
    <property type="evidence" value="ECO:0007669"/>
    <property type="project" value="UniProtKB-SubCell"/>
</dbReference>
<dbReference type="GO" id="GO:0004325">
    <property type="term" value="F:ferrochelatase activity"/>
    <property type="evidence" value="ECO:0007669"/>
    <property type="project" value="UniProtKB-UniRule"/>
</dbReference>
<dbReference type="GO" id="GO:0046872">
    <property type="term" value="F:metal ion binding"/>
    <property type="evidence" value="ECO:0007669"/>
    <property type="project" value="UniProtKB-KW"/>
</dbReference>
<dbReference type="GO" id="GO:0006783">
    <property type="term" value="P:heme biosynthetic process"/>
    <property type="evidence" value="ECO:0007669"/>
    <property type="project" value="UniProtKB-UniRule"/>
</dbReference>
<dbReference type="CDD" id="cd00419">
    <property type="entry name" value="Ferrochelatase_C"/>
    <property type="match status" value="1"/>
</dbReference>
<dbReference type="CDD" id="cd03411">
    <property type="entry name" value="Ferrochelatase_N"/>
    <property type="match status" value="1"/>
</dbReference>
<dbReference type="FunFam" id="3.40.50.1400:FF:000006">
    <property type="entry name" value="Ferrochelatase"/>
    <property type="match status" value="1"/>
</dbReference>
<dbReference type="Gene3D" id="3.40.50.1400">
    <property type="match status" value="2"/>
</dbReference>
<dbReference type="HAMAP" id="MF_00323">
    <property type="entry name" value="Ferrochelatase"/>
    <property type="match status" value="1"/>
</dbReference>
<dbReference type="InterPro" id="IPR001015">
    <property type="entry name" value="Ferrochelatase"/>
</dbReference>
<dbReference type="InterPro" id="IPR019772">
    <property type="entry name" value="Ferrochelatase_AS"/>
</dbReference>
<dbReference type="InterPro" id="IPR033644">
    <property type="entry name" value="Ferrochelatase_C"/>
</dbReference>
<dbReference type="InterPro" id="IPR033659">
    <property type="entry name" value="Ferrochelatase_N"/>
</dbReference>
<dbReference type="NCBIfam" id="TIGR00109">
    <property type="entry name" value="hemH"/>
    <property type="match status" value="1"/>
</dbReference>
<dbReference type="PANTHER" id="PTHR11108">
    <property type="entry name" value="FERROCHELATASE"/>
    <property type="match status" value="1"/>
</dbReference>
<dbReference type="PANTHER" id="PTHR11108:SF1">
    <property type="entry name" value="FERROCHELATASE, MITOCHONDRIAL"/>
    <property type="match status" value="1"/>
</dbReference>
<dbReference type="Pfam" id="PF00762">
    <property type="entry name" value="Ferrochelatase"/>
    <property type="match status" value="1"/>
</dbReference>
<dbReference type="SUPFAM" id="SSF53800">
    <property type="entry name" value="Chelatase"/>
    <property type="match status" value="1"/>
</dbReference>
<dbReference type="SUPFAM" id="SSF103511">
    <property type="entry name" value="Chlorophyll a-b binding protein"/>
    <property type="match status" value="1"/>
</dbReference>
<dbReference type="PROSITE" id="PS00534">
    <property type="entry name" value="FERROCHELATASE"/>
    <property type="match status" value="1"/>
</dbReference>
<evidence type="ECO:0000255" key="1">
    <source>
        <dbReference type="HAMAP-Rule" id="MF_00323"/>
    </source>
</evidence>
<evidence type="ECO:0000305" key="2"/>
<proteinExistence type="inferred from homology"/>
<feature type="chain" id="PRO_0000175215" description="Ferrochelatase">
    <location>
        <begin position="1"/>
        <end position="388"/>
    </location>
</feature>
<feature type="binding site" evidence="1">
    <location>
        <position position="197"/>
    </location>
    <ligand>
        <name>Fe cation</name>
        <dbReference type="ChEBI" id="CHEBI:24875"/>
    </ligand>
</feature>
<feature type="binding site" evidence="1">
    <location>
        <position position="278"/>
    </location>
    <ligand>
        <name>Fe cation</name>
        <dbReference type="ChEBI" id="CHEBI:24875"/>
    </ligand>
</feature>
<protein>
    <recommendedName>
        <fullName evidence="1">Ferrochelatase</fullName>
        <ecNumber evidence="1">4.98.1.1</ecNumber>
    </recommendedName>
    <alternativeName>
        <fullName evidence="1">Heme synthase</fullName>
    </alternativeName>
    <alternativeName>
        <fullName evidence="1">Protoheme ferro-lyase</fullName>
    </alternativeName>
</protein>
<organism>
    <name type="scientific">Thermosynechococcus vestitus (strain NIES-2133 / IAM M-273 / BP-1)</name>
    <dbReference type="NCBI Taxonomy" id="197221"/>
    <lineage>
        <taxon>Bacteria</taxon>
        <taxon>Bacillati</taxon>
        <taxon>Cyanobacteriota</taxon>
        <taxon>Cyanophyceae</taxon>
        <taxon>Acaryochloridales</taxon>
        <taxon>Thermosynechococcaceae</taxon>
        <taxon>Thermosynechococcus</taxon>
    </lineage>
</organism>
<reference key="1">
    <citation type="journal article" date="2002" name="DNA Res.">
        <title>Complete genome structure of the thermophilic cyanobacterium Thermosynechococcus elongatus BP-1.</title>
        <authorList>
            <person name="Nakamura Y."/>
            <person name="Kaneko T."/>
            <person name="Sato S."/>
            <person name="Ikeuchi M."/>
            <person name="Katoh H."/>
            <person name="Sasamoto S."/>
            <person name="Watanabe A."/>
            <person name="Iriguchi M."/>
            <person name="Kawashima K."/>
            <person name="Kimura T."/>
            <person name="Kishida Y."/>
            <person name="Kiyokawa C."/>
            <person name="Kohara M."/>
            <person name="Matsumoto M."/>
            <person name="Matsuno A."/>
            <person name="Nakazaki N."/>
            <person name="Shimpo S."/>
            <person name="Sugimoto M."/>
            <person name="Takeuchi C."/>
            <person name="Yamada M."/>
            <person name="Tabata S."/>
        </authorList>
    </citation>
    <scope>NUCLEOTIDE SEQUENCE [LARGE SCALE GENOMIC DNA]</scope>
    <source>
        <strain>NIES-2133 / IAM M-273 / BP-1</strain>
    </source>
</reference>
<gene>
    <name evidence="1" type="primary">hemH</name>
    <name type="ordered locus">tlr2216</name>
</gene>
<comment type="function">
    <text evidence="1">Catalyzes the ferrous insertion into protoporphyrin IX.</text>
</comment>
<comment type="catalytic activity">
    <reaction evidence="1">
        <text>heme b + 2 H(+) = protoporphyrin IX + Fe(2+)</text>
        <dbReference type="Rhea" id="RHEA:22584"/>
        <dbReference type="ChEBI" id="CHEBI:15378"/>
        <dbReference type="ChEBI" id="CHEBI:29033"/>
        <dbReference type="ChEBI" id="CHEBI:57306"/>
        <dbReference type="ChEBI" id="CHEBI:60344"/>
        <dbReference type="EC" id="4.98.1.1"/>
    </reaction>
</comment>
<comment type="pathway">
    <text evidence="1">Porphyrin-containing compound metabolism; protoheme biosynthesis; protoheme from protoporphyrin-IX: step 1/1.</text>
</comment>
<comment type="subcellular location">
    <subcellularLocation>
        <location evidence="1">Cytoplasm</location>
    </subcellularLocation>
</comment>
<comment type="similarity">
    <text evidence="1">Belongs to the ferrochelatase family.</text>
</comment>
<comment type="sequence caution" evidence="2">
    <conflict type="erroneous initiation">
        <sequence resource="EMBL-CDS" id="BAC09768"/>
    </conflict>
</comment>
<sequence length="388" mass="43876">MASQTGVLLLNLGGPDRPEDVRPFLYNLFSDPEIIRLPFRWLQKPLAWFISTSRARRSQANYAQIGGGSPLRRITEQQARALKDALEGIGIEANLYIGMRYWHPFTEEAIAQIKADQIRELVILPLYPQFSISTSGSSFRLLESLWNQDPELQKIRYTLIPSWYNHPGYVAAMADLIRQELDRCPNPDEAVIFFSAHGVPKSYVTEAGDPYQEEIEACVRLIMAALNRPNAHVLAYQSRVGPVEWLQPYTEDVILELAAQGVKTLVVVPISFVSEHIETLQEIDIEYREIAAEAGIEVFRRVPALNDHNGFISALAQLVKEALAAPPRTFAEVNQSRKRVKLYPQERWEWGMTSAAERWNGRLAMLGFLALMIELISGQGPLHMLGLL</sequence>